<reference key="1">
    <citation type="journal article" date="2002" name="J. Bacteriol.">
        <title>Characterization of an rRNA operon (rrnB) of Mycobacterium fortuitum and other mycobacterial species: implications for the classification of mycobacteria.</title>
        <authorList>
            <person name="Menendez M.C."/>
            <person name="Garcia M.J."/>
            <person name="Navarro M.C."/>
            <person name="Gonzalez-y-Merchand J.A."/>
            <person name="Rivera-Gutierrez S."/>
            <person name="Garcia-Sanchez L."/>
            <person name="Cox R.A."/>
        </authorList>
    </citation>
    <scope>NUCLEOTIDE SEQUENCE [GENOMIC DNA]</scope>
    <source>
        <strain>ATCC 6841 / DSM 46621 / CIP 104534 / JCM 6387 / KCTC 9510 / NBRC 13159 / NCTC 10394</strain>
    </source>
</reference>
<sequence length="428" mass="46982">MSMGILDELDWRGLIAQSTDRETLANDLANGPMTVYSGFDPTAPSLHAGHLVPLLTLRRFQRAGHRPIVLAGGATGMIGDPRDTGERTLNTADTVADWAGRIRGQLERFVEFDDTPTGAIVENNLNWTGRLSAIEFLRDLGKYFSVNVMLDRETVRRRLEGDGISYTEFSYMLLQANDFVELHQRYGCALQIGGSDQWGNIVAGARLVRQKLGATVHAMTTPLVTDSEGKKFGKSTGGGNLWLDPEMTSPYAWYQYFVNTADADVIGYLRWFTFLSADEIAELEDATQNRAHERAAQKRLARELTTLVHGEGATTAVELASQALFGRAELADLDESTLGAALREASNGQVAELKPGGPDSIVDLLVETGLAASKGAARRNVAEGGVYVNNIRIESDEWIPQHSDFLHERWLVLRRGKRHIAGVERVGA</sequence>
<keyword id="KW-0030">Aminoacyl-tRNA synthetase</keyword>
<keyword id="KW-0067">ATP-binding</keyword>
<keyword id="KW-0963">Cytoplasm</keyword>
<keyword id="KW-0436">Ligase</keyword>
<keyword id="KW-0547">Nucleotide-binding</keyword>
<keyword id="KW-0648">Protein biosynthesis</keyword>
<keyword id="KW-0694">RNA-binding</keyword>
<accession>Q9EUU8</accession>
<protein>
    <recommendedName>
        <fullName evidence="1">Tyrosine--tRNA ligase</fullName>
        <ecNumber evidence="1">6.1.1.1</ecNumber>
    </recommendedName>
    <alternativeName>
        <fullName evidence="1">Tyrosyl-tRNA synthetase</fullName>
        <shortName evidence="1">TyrRS</shortName>
    </alternativeName>
</protein>
<feature type="chain" id="PRO_0000234727" description="Tyrosine--tRNA ligase">
    <location>
        <begin position="1"/>
        <end position="428"/>
    </location>
</feature>
<feature type="domain" description="S4 RNA-binding" evidence="1">
    <location>
        <begin position="359"/>
        <end position="416"/>
    </location>
</feature>
<feature type="short sequence motif" description="'HIGH' region">
    <location>
        <begin position="41"/>
        <end position="50"/>
    </location>
</feature>
<feature type="short sequence motif" description="'KMSKS' region">
    <location>
        <begin position="231"/>
        <end position="235"/>
    </location>
</feature>
<feature type="binding site" evidence="1">
    <location>
        <position position="36"/>
    </location>
    <ligand>
        <name>L-tyrosine</name>
        <dbReference type="ChEBI" id="CHEBI:58315"/>
    </ligand>
</feature>
<feature type="binding site" evidence="1">
    <location>
        <position position="171"/>
    </location>
    <ligand>
        <name>L-tyrosine</name>
        <dbReference type="ChEBI" id="CHEBI:58315"/>
    </ligand>
</feature>
<feature type="binding site" evidence="1">
    <location>
        <position position="175"/>
    </location>
    <ligand>
        <name>L-tyrosine</name>
        <dbReference type="ChEBI" id="CHEBI:58315"/>
    </ligand>
</feature>
<feature type="binding site" evidence="1">
    <location>
        <position position="234"/>
    </location>
    <ligand>
        <name>ATP</name>
        <dbReference type="ChEBI" id="CHEBI:30616"/>
    </ligand>
</feature>
<dbReference type="EC" id="6.1.1.1" evidence="1"/>
<dbReference type="EMBL" id="AJ296160">
    <property type="protein sequence ID" value="CAC18748.1"/>
    <property type="molecule type" value="Genomic_DNA"/>
</dbReference>
<dbReference type="SMR" id="Q9EUU8"/>
<dbReference type="STRING" id="1766.XA26_34930"/>
<dbReference type="GO" id="GO:0005829">
    <property type="term" value="C:cytosol"/>
    <property type="evidence" value="ECO:0007669"/>
    <property type="project" value="TreeGrafter"/>
</dbReference>
<dbReference type="GO" id="GO:0005524">
    <property type="term" value="F:ATP binding"/>
    <property type="evidence" value="ECO:0007669"/>
    <property type="project" value="UniProtKB-UniRule"/>
</dbReference>
<dbReference type="GO" id="GO:0003723">
    <property type="term" value="F:RNA binding"/>
    <property type="evidence" value="ECO:0007669"/>
    <property type="project" value="UniProtKB-KW"/>
</dbReference>
<dbReference type="GO" id="GO:0004831">
    <property type="term" value="F:tyrosine-tRNA ligase activity"/>
    <property type="evidence" value="ECO:0007669"/>
    <property type="project" value="UniProtKB-UniRule"/>
</dbReference>
<dbReference type="GO" id="GO:0006437">
    <property type="term" value="P:tyrosyl-tRNA aminoacylation"/>
    <property type="evidence" value="ECO:0007669"/>
    <property type="project" value="UniProtKB-UniRule"/>
</dbReference>
<dbReference type="CDD" id="cd00165">
    <property type="entry name" value="S4"/>
    <property type="match status" value="1"/>
</dbReference>
<dbReference type="CDD" id="cd00805">
    <property type="entry name" value="TyrRS_core"/>
    <property type="match status" value="1"/>
</dbReference>
<dbReference type="FunFam" id="1.10.240.10:FF:000001">
    <property type="entry name" value="Tyrosine--tRNA ligase"/>
    <property type="match status" value="1"/>
</dbReference>
<dbReference type="FunFam" id="3.10.290.10:FF:000014">
    <property type="entry name" value="Tyrosine--tRNA ligase"/>
    <property type="match status" value="1"/>
</dbReference>
<dbReference type="FunFam" id="3.40.50.620:FF:000008">
    <property type="entry name" value="Tyrosine--tRNA ligase"/>
    <property type="match status" value="1"/>
</dbReference>
<dbReference type="Gene3D" id="3.40.50.620">
    <property type="entry name" value="HUPs"/>
    <property type="match status" value="1"/>
</dbReference>
<dbReference type="Gene3D" id="3.10.290.10">
    <property type="entry name" value="RNA-binding S4 domain"/>
    <property type="match status" value="1"/>
</dbReference>
<dbReference type="Gene3D" id="1.10.240.10">
    <property type="entry name" value="Tyrosyl-Transfer RNA Synthetase"/>
    <property type="match status" value="1"/>
</dbReference>
<dbReference type="HAMAP" id="MF_02006">
    <property type="entry name" value="Tyr_tRNA_synth_type1"/>
    <property type="match status" value="1"/>
</dbReference>
<dbReference type="InterPro" id="IPR001412">
    <property type="entry name" value="aa-tRNA-synth_I_CS"/>
</dbReference>
<dbReference type="InterPro" id="IPR002305">
    <property type="entry name" value="aa-tRNA-synth_Ic"/>
</dbReference>
<dbReference type="InterPro" id="IPR014729">
    <property type="entry name" value="Rossmann-like_a/b/a_fold"/>
</dbReference>
<dbReference type="InterPro" id="IPR036986">
    <property type="entry name" value="S4_RNA-bd_sf"/>
</dbReference>
<dbReference type="InterPro" id="IPR054608">
    <property type="entry name" value="SYY-like_C"/>
</dbReference>
<dbReference type="InterPro" id="IPR002307">
    <property type="entry name" value="Tyr-tRNA-ligase"/>
</dbReference>
<dbReference type="InterPro" id="IPR024088">
    <property type="entry name" value="Tyr-tRNA-ligase_bac-type"/>
</dbReference>
<dbReference type="InterPro" id="IPR024107">
    <property type="entry name" value="Tyr-tRNA-ligase_bac_1"/>
</dbReference>
<dbReference type="NCBIfam" id="TIGR00234">
    <property type="entry name" value="tyrS"/>
    <property type="match status" value="1"/>
</dbReference>
<dbReference type="PANTHER" id="PTHR11766:SF0">
    <property type="entry name" value="TYROSINE--TRNA LIGASE, MITOCHONDRIAL"/>
    <property type="match status" value="1"/>
</dbReference>
<dbReference type="PANTHER" id="PTHR11766">
    <property type="entry name" value="TYROSYL-TRNA SYNTHETASE"/>
    <property type="match status" value="1"/>
</dbReference>
<dbReference type="Pfam" id="PF22421">
    <property type="entry name" value="SYY_C-terminal"/>
    <property type="match status" value="1"/>
</dbReference>
<dbReference type="Pfam" id="PF00579">
    <property type="entry name" value="tRNA-synt_1b"/>
    <property type="match status" value="1"/>
</dbReference>
<dbReference type="PRINTS" id="PR01040">
    <property type="entry name" value="TRNASYNTHTYR"/>
</dbReference>
<dbReference type="SUPFAM" id="SSF55174">
    <property type="entry name" value="Alpha-L RNA-binding motif"/>
    <property type="match status" value="1"/>
</dbReference>
<dbReference type="SUPFAM" id="SSF52374">
    <property type="entry name" value="Nucleotidylyl transferase"/>
    <property type="match status" value="1"/>
</dbReference>
<dbReference type="PROSITE" id="PS00178">
    <property type="entry name" value="AA_TRNA_LIGASE_I"/>
    <property type="match status" value="1"/>
</dbReference>
<organism>
    <name type="scientific">Mycolicibacterium fortuitum</name>
    <name type="common">Mycobacterium fortuitum</name>
    <dbReference type="NCBI Taxonomy" id="1766"/>
    <lineage>
        <taxon>Bacteria</taxon>
        <taxon>Bacillati</taxon>
        <taxon>Actinomycetota</taxon>
        <taxon>Actinomycetes</taxon>
        <taxon>Mycobacteriales</taxon>
        <taxon>Mycobacteriaceae</taxon>
        <taxon>Mycolicibacterium</taxon>
    </lineage>
</organism>
<proteinExistence type="inferred from homology"/>
<name>SYY_MYCFO</name>
<comment type="function">
    <text evidence="1">Catalyzes the attachment of tyrosine to tRNA(Tyr) in a two-step reaction: tyrosine is first activated by ATP to form Tyr-AMP and then transferred to the acceptor end of tRNA(Tyr).</text>
</comment>
<comment type="catalytic activity">
    <reaction evidence="1">
        <text>tRNA(Tyr) + L-tyrosine + ATP = L-tyrosyl-tRNA(Tyr) + AMP + diphosphate + H(+)</text>
        <dbReference type="Rhea" id="RHEA:10220"/>
        <dbReference type="Rhea" id="RHEA-COMP:9706"/>
        <dbReference type="Rhea" id="RHEA-COMP:9707"/>
        <dbReference type="ChEBI" id="CHEBI:15378"/>
        <dbReference type="ChEBI" id="CHEBI:30616"/>
        <dbReference type="ChEBI" id="CHEBI:33019"/>
        <dbReference type="ChEBI" id="CHEBI:58315"/>
        <dbReference type="ChEBI" id="CHEBI:78442"/>
        <dbReference type="ChEBI" id="CHEBI:78536"/>
        <dbReference type="ChEBI" id="CHEBI:456215"/>
        <dbReference type="EC" id="6.1.1.1"/>
    </reaction>
</comment>
<comment type="subunit">
    <text evidence="1">Homodimer.</text>
</comment>
<comment type="subcellular location">
    <subcellularLocation>
        <location evidence="1">Cytoplasm</location>
    </subcellularLocation>
</comment>
<comment type="similarity">
    <text evidence="1">Belongs to the class-I aminoacyl-tRNA synthetase family. TyrS type 1 subfamily.</text>
</comment>
<gene>
    <name evidence="1" type="primary">tyrS</name>
</gene>
<evidence type="ECO:0000255" key="1">
    <source>
        <dbReference type="HAMAP-Rule" id="MF_02006"/>
    </source>
</evidence>